<proteinExistence type="evidence at protein level"/>
<protein>
    <recommendedName>
        <fullName>Plasma serine protease inhibitor</fullName>
    </recommendedName>
    <alternativeName>
        <fullName>Protein C inhibitor</fullName>
        <shortName>PCI</shortName>
    </alternativeName>
    <alternativeName>
        <fullName>Serpin A5</fullName>
    </alternativeName>
</protein>
<name>IPSP_BOVIN</name>
<sequence>MRLCLFLCLVLLGPRMATLRRSQKKKIQEVPPAVTTAPPGSRDFVFDLYRALAAAAPAQNIFFSPLSITVSLAMLSLGAQSNTKAQILEGLGIGPGEGSEEELHSASQRLLRELQQPQDSLQLSLGNALFTKPRLPIQEAFLGAMRTLYLADTFPTNFEDPEGAKKKINDYVAKQTKGKIVDLIKSLDGTQVMVMVNYIFFKAKWETSFNLKSTHEQDFYVTPETVVRVPMMKQQDQFYYLLDRNLSCKVVGVPYQGNATAFFILPREGEMEQVENGLKEKTLKKWLRMPMKRRLELYLPKFSIEGSYQLEEVLPKLGIRDIFTSDADLTGISNHSSIRVSEMVHKAVVEVDESGTQAAAATGMVITFKSARLGSQRIVFNRPFLVLIVKNSKHILFLGKVTRP</sequence>
<keyword id="KW-0002">3D-structure</keyword>
<keyword id="KW-0903">Direct protein sequencing</keyword>
<keyword id="KW-0278">Fertilization</keyword>
<keyword id="KW-0325">Glycoprotein</keyword>
<keyword id="KW-0358">Heparin-binding</keyword>
<keyword id="KW-0445">Lipid transport</keyword>
<keyword id="KW-0646">Protease inhibitor</keyword>
<keyword id="KW-1185">Reference proteome</keyword>
<keyword id="KW-0964">Secreted</keyword>
<keyword id="KW-0722">Serine protease inhibitor</keyword>
<keyword id="KW-0732">Signal</keyword>
<keyword id="KW-0813">Transport</keyword>
<accession>Q9N2I2</accession>
<accession>A7E3W0</accession>
<gene>
    <name type="primary">SERPINA5</name>
</gene>
<dbReference type="EMBL" id="AB026444">
    <property type="protein sequence ID" value="BAA93451.1"/>
    <property type="molecule type" value="mRNA"/>
</dbReference>
<dbReference type="EMBL" id="BT030731">
    <property type="protein sequence ID" value="ABS45047.1"/>
    <property type="molecule type" value="mRNA"/>
</dbReference>
<dbReference type="EMBL" id="BC109553">
    <property type="protein sequence ID" value="AAI09554.1"/>
    <property type="molecule type" value="mRNA"/>
</dbReference>
<dbReference type="PIR" id="PX0029">
    <property type="entry name" value="PX0029"/>
</dbReference>
<dbReference type="PDB" id="3B9F">
    <property type="method" value="X-ray"/>
    <property type="resolution" value="1.60 A"/>
    <property type="chains" value="I=42-404"/>
</dbReference>
<dbReference type="PDBsum" id="3B9F"/>
<dbReference type="SMR" id="Q9N2I2"/>
<dbReference type="FunCoup" id="Q9N2I2">
    <property type="interactions" value="103"/>
</dbReference>
<dbReference type="STRING" id="9913.ENSBTAP00000005307"/>
<dbReference type="MEROPS" id="I04.004"/>
<dbReference type="GlyConnect" id="819">
    <property type="glycosylation" value="2 O-Linked glycans (2 sites)"/>
</dbReference>
<dbReference type="GlyCosmos" id="Q9N2I2">
    <property type="glycosylation" value="5 sites, 1 glycan"/>
</dbReference>
<dbReference type="GlyGen" id="Q9N2I2">
    <property type="glycosylation" value="5 sites, 1 O-linked glycan (1 site)"/>
</dbReference>
<dbReference type="iPTMnet" id="Q9N2I2"/>
<dbReference type="PaxDb" id="9913-ENSBTAP00000005307"/>
<dbReference type="KEGG" id="bta:338050"/>
<dbReference type="eggNOG" id="KOG2392">
    <property type="taxonomic scope" value="Eukaryota"/>
</dbReference>
<dbReference type="HOGENOM" id="CLU_023330_2_1_1"/>
<dbReference type="InParanoid" id="Q9N2I2"/>
<dbReference type="OrthoDB" id="671595at2759"/>
<dbReference type="TreeFam" id="TF343201"/>
<dbReference type="SABIO-RK" id="Q9N2I2"/>
<dbReference type="EvolutionaryTrace" id="Q9N2I2"/>
<dbReference type="Proteomes" id="UP000009136">
    <property type="component" value="Unplaced"/>
</dbReference>
<dbReference type="GO" id="GO:0002080">
    <property type="term" value="C:acrosomal membrane"/>
    <property type="evidence" value="ECO:0000250"/>
    <property type="project" value="UniProtKB"/>
</dbReference>
<dbReference type="GO" id="GO:0005615">
    <property type="term" value="C:extracellular space"/>
    <property type="evidence" value="ECO:0000250"/>
    <property type="project" value="UniProtKB"/>
</dbReference>
<dbReference type="GO" id="GO:0031091">
    <property type="term" value="C:platelet alpha granule"/>
    <property type="evidence" value="ECO:0000250"/>
    <property type="project" value="UniProtKB"/>
</dbReference>
<dbReference type="GO" id="GO:0031094">
    <property type="term" value="C:platelet dense tubular network"/>
    <property type="evidence" value="ECO:0000250"/>
    <property type="project" value="UniProtKB"/>
</dbReference>
<dbReference type="GO" id="GO:0097181">
    <property type="term" value="C:protein C inhibitor-coagulation factor V complex"/>
    <property type="evidence" value="ECO:0000250"/>
    <property type="project" value="UniProtKB"/>
</dbReference>
<dbReference type="GO" id="GO:0097182">
    <property type="term" value="C:protein C inhibitor-coagulation factor Xa complex"/>
    <property type="evidence" value="ECO:0000250"/>
    <property type="project" value="UniProtKB"/>
</dbReference>
<dbReference type="GO" id="GO:0097183">
    <property type="term" value="C:protein C inhibitor-coagulation factor XI complex"/>
    <property type="evidence" value="ECO:0000250"/>
    <property type="project" value="UniProtKB"/>
</dbReference>
<dbReference type="GO" id="GO:0036029">
    <property type="term" value="C:protein C inhibitor-KLK3 complex"/>
    <property type="evidence" value="ECO:0000250"/>
    <property type="project" value="UniProtKB"/>
</dbReference>
<dbReference type="GO" id="GO:0036030">
    <property type="term" value="C:protein C inhibitor-plasma kallikrein complex"/>
    <property type="evidence" value="ECO:0000250"/>
    <property type="project" value="UniProtKB"/>
</dbReference>
<dbReference type="GO" id="GO:0036026">
    <property type="term" value="C:protein C inhibitor-PLAT complex"/>
    <property type="evidence" value="ECO:0000250"/>
    <property type="project" value="UniProtKB"/>
</dbReference>
<dbReference type="GO" id="GO:0036027">
    <property type="term" value="C:protein C inhibitor-PLAU complex"/>
    <property type="evidence" value="ECO:0000250"/>
    <property type="project" value="UniProtKB"/>
</dbReference>
<dbReference type="GO" id="GO:0036028">
    <property type="term" value="C:protein C inhibitor-thrombin complex"/>
    <property type="evidence" value="ECO:0000250"/>
    <property type="project" value="UniProtKB"/>
</dbReference>
<dbReference type="GO" id="GO:0036025">
    <property type="term" value="C:protein C inhibitor-TMPRSS11E complex"/>
    <property type="evidence" value="ECO:0000250"/>
    <property type="project" value="UniProtKB"/>
</dbReference>
<dbReference type="GO" id="GO:0036024">
    <property type="term" value="C:protein C inhibitor-TMPRSS7 complex"/>
    <property type="evidence" value="ECO:0000250"/>
    <property type="project" value="UniProtKB"/>
</dbReference>
<dbReference type="GO" id="GO:0008201">
    <property type="term" value="F:heparin binding"/>
    <property type="evidence" value="ECO:0007669"/>
    <property type="project" value="UniProtKB-KW"/>
</dbReference>
<dbReference type="GO" id="GO:0031210">
    <property type="term" value="F:phosphatidylcholine binding"/>
    <property type="evidence" value="ECO:0000250"/>
    <property type="project" value="UniProtKB"/>
</dbReference>
<dbReference type="GO" id="GO:0001972">
    <property type="term" value="F:retinoic acid binding"/>
    <property type="evidence" value="ECO:0000250"/>
    <property type="project" value="UniProtKB"/>
</dbReference>
<dbReference type="GO" id="GO:0004867">
    <property type="term" value="F:serine-type endopeptidase inhibitor activity"/>
    <property type="evidence" value="ECO:0000250"/>
    <property type="project" value="UniProtKB"/>
</dbReference>
<dbReference type="GO" id="GO:0006869">
    <property type="term" value="P:lipid transport"/>
    <property type="evidence" value="ECO:0007669"/>
    <property type="project" value="UniProtKB-KW"/>
</dbReference>
<dbReference type="GO" id="GO:0007338">
    <property type="term" value="P:single fertilization"/>
    <property type="evidence" value="ECO:0007669"/>
    <property type="project" value="UniProtKB-KW"/>
</dbReference>
<dbReference type="CDD" id="cd19553">
    <property type="entry name" value="serpinA5_PCI"/>
    <property type="match status" value="1"/>
</dbReference>
<dbReference type="FunFam" id="3.30.497.10:FF:000001">
    <property type="entry name" value="Serine protease inhibitor"/>
    <property type="match status" value="1"/>
</dbReference>
<dbReference type="FunFam" id="2.30.39.10:FF:000002">
    <property type="entry name" value="Serpin family D member 1"/>
    <property type="match status" value="1"/>
</dbReference>
<dbReference type="Gene3D" id="2.30.39.10">
    <property type="entry name" value="Alpha-1-antitrypsin, domain 1"/>
    <property type="match status" value="1"/>
</dbReference>
<dbReference type="Gene3D" id="3.30.497.10">
    <property type="entry name" value="Antithrombin, subunit I, domain 2"/>
    <property type="match status" value="1"/>
</dbReference>
<dbReference type="InterPro" id="IPR023795">
    <property type="entry name" value="Serpin_CS"/>
</dbReference>
<dbReference type="InterPro" id="IPR023796">
    <property type="entry name" value="Serpin_dom"/>
</dbReference>
<dbReference type="InterPro" id="IPR000215">
    <property type="entry name" value="Serpin_fam"/>
</dbReference>
<dbReference type="InterPro" id="IPR036186">
    <property type="entry name" value="Serpin_sf"/>
</dbReference>
<dbReference type="InterPro" id="IPR042178">
    <property type="entry name" value="Serpin_sf_1"/>
</dbReference>
<dbReference type="InterPro" id="IPR042185">
    <property type="entry name" value="Serpin_sf_2"/>
</dbReference>
<dbReference type="PANTHER" id="PTHR11461:SF274">
    <property type="entry name" value="PLASMA SERINE PROTEASE INHIBITOR"/>
    <property type="match status" value="1"/>
</dbReference>
<dbReference type="PANTHER" id="PTHR11461">
    <property type="entry name" value="SERINE PROTEASE INHIBITOR, SERPIN"/>
    <property type="match status" value="1"/>
</dbReference>
<dbReference type="Pfam" id="PF00079">
    <property type="entry name" value="Serpin"/>
    <property type="match status" value="1"/>
</dbReference>
<dbReference type="SMART" id="SM00093">
    <property type="entry name" value="SERPIN"/>
    <property type="match status" value="1"/>
</dbReference>
<dbReference type="SUPFAM" id="SSF56574">
    <property type="entry name" value="Serpins"/>
    <property type="match status" value="1"/>
</dbReference>
<dbReference type="PROSITE" id="PS00284">
    <property type="entry name" value="SERPIN"/>
    <property type="match status" value="1"/>
</dbReference>
<reference key="1">
    <citation type="journal article" date="2000" name="Thromb. Haemost.">
        <title>Bovine protein C inhibitor has a unique reactive site and can transiently inhibit plasmin.</title>
        <authorList>
            <person name="Yuasa H."/>
            <person name="Tanaka H."/>
            <person name="Hayashi T."/>
            <person name="Wakita T."/>
            <person name="Nakamura H."/>
            <person name="Nishioka J."/>
            <person name="Kawarada Y."/>
            <person name="Suzuki K."/>
        </authorList>
    </citation>
    <scope>NUCLEOTIDE SEQUENCE [MRNA]</scope>
    <scope>FUNCTION</scope>
    <scope>TISSUE SPECIFICITY</scope>
</reference>
<reference key="2">
    <citation type="journal article" date="2005" name="BMC Genomics">
        <title>Characterization of 954 bovine full-CDS cDNA sequences.</title>
        <authorList>
            <person name="Harhay G.P."/>
            <person name="Sonstegard T.S."/>
            <person name="Keele J.W."/>
            <person name="Heaton M.P."/>
            <person name="Clawson M.L."/>
            <person name="Snelling W.M."/>
            <person name="Wiedmann R.T."/>
            <person name="Van Tassell C.P."/>
            <person name="Smith T.P.L."/>
        </authorList>
    </citation>
    <scope>NUCLEOTIDE SEQUENCE [LARGE SCALE MRNA]</scope>
</reference>
<reference key="3">
    <citation type="submission" date="2005-11" db="EMBL/GenBank/DDBJ databases">
        <authorList>
            <consortium name="NIH - Mammalian Gene Collection (MGC) project"/>
        </authorList>
    </citation>
    <scope>NUCLEOTIDE SEQUENCE [LARGE SCALE MRNA]</scope>
    <source>
        <strain>Crossbred X Angus</strain>
        <tissue>Liver</tissue>
    </source>
</reference>
<reference key="4">
    <citation type="journal article" date="1990" name="J. Biochem.">
        <title>Bovine plasma protein C inhibitor with structural and functional homologous properties to human plasma protein C inhibitor.</title>
        <authorList>
            <person name="Suzuki K."/>
            <person name="Kusumoto H."/>
            <person name="Nishioka J."/>
            <person name="Komiyama Y."/>
        </authorList>
    </citation>
    <scope>PROTEIN SEQUENCE OF 20-68</scope>
    <scope>FUNCTION</scope>
    <scope>GLYCOSYLATION</scope>
</reference>
<reference key="5">
    <citation type="journal article" date="2009" name="Mol. Cell. Proteomics">
        <title>Affinity enrichment and characterization of mucin core-1 type glycopeptides from bovine serum.</title>
        <authorList>
            <person name="Darula Z."/>
            <person name="Medzihradszky K.F."/>
        </authorList>
    </citation>
    <scope>GLYCOSYLATION AT THR-35 AND THR-36</scope>
    <scope>IDENTIFICATION BY MASS SPECTROMETRY</scope>
</reference>
<reference key="6">
    <citation type="journal article" date="2008" name="Proc. Natl. Acad. Sci. U.S.A.">
        <title>Molecular basis of thrombin recognition by protein C inhibitor revealed by the 1.6-A structure of the heparin-bridged complex.</title>
        <authorList>
            <person name="Li W."/>
            <person name="Adams T.E."/>
            <person name="Nangalia J."/>
            <person name="Esmon C.T."/>
            <person name="Huntington J.A."/>
        </authorList>
    </citation>
    <scope>X-RAY CRYSTALLOGRAPHY (1.6 ANGSTROMS) OF 42-404 IN COMPLEX WITH F2 AND SYNTHETIC HEPARIN</scope>
</reference>
<organism>
    <name type="scientific">Bos taurus</name>
    <name type="common">Bovine</name>
    <dbReference type="NCBI Taxonomy" id="9913"/>
    <lineage>
        <taxon>Eukaryota</taxon>
        <taxon>Metazoa</taxon>
        <taxon>Chordata</taxon>
        <taxon>Craniata</taxon>
        <taxon>Vertebrata</taxon>
        <taxon>Euteleostomi</taxon>
        <taxon>Mammalia</taxon>
        <taxon>Eutheria</taxon>
        <taxon>Laurasiatheria</taxon>
        <taxon>Artiodactyla</taxon>
        <taxon>Ruminantia</taxon>
        <taxon>Pecora</taxon>
        <taxon>Bovidae</taxon>
        <taxon>Bovinae</taxon>
        <taxon>Bos</taxon>
    </lineage>
</organism>
<comment type="function">
    <text evidence="1 3 5">Heparin-dependent serine protease inhibitor acting in body fluids and secretions. Inactivates serine proteases by binding irreversibly to their serine activation site. Involved in the regulation of intravascular and extravascular proteolytic activities. Plays hemostatic roles in the blood plasma. Acts as a procoagulant and pro-inflammatory factor by inhibiting the anticoagulant activated protein C factor as well as the generation of activated protein C factor by the thrombin/thrombomodulin complex. Acts as an anticoagulant factor by inhibiting blood coagulation factors like prothrombin, factor XI, factor Xa, plasma kallikrein and fibrinolytic enzymes such as tissue- and urinary-type plasminogen activators. In seminal plasma, inactivates several serine proteases implicated in the reproductive system. Inhibits the serpin acrosin; indirectly protects component of the male genital tract from being degraded by excessive released acrosin. Inhibits tissue- and urinary-type plasminogen activator, prostate-specific antigen and kallikrein activities; has a control on the sperm motility and fertilization. Inhibits the activated protein C-catalyzed degradation of SEMG1 and SEMG2; regulates the degradation of semenogelin during the process of transfer of spermatozoa from the male reproductive tract into the female tract. In urine, inhibits urinary-type plasminogen activator and kallikrein activities. Inactivates membrane-anchored serine proteases activities such as MPRSS7 and TMPRSS11E. Inhibits urinary-type plasminogen activator-dependent tumor cell invasion and metastasis. May also play a non-inhibitory role in seminal plasma and urine as a hydrophobic hormone carrier by its binding to retinoic acid (By similarity).</text>
</comment>
<comment type="activity regulation">
    <text evidence="1">Its inhibitory activity is greatly enhanced in the presence of glycosaminoglycans, heparin, thrombomodulin and phospholipids vesicles.</text>
</comment>
<comment type="subunit">
    <text evidence="1">Forms protease inhibiting heterodimers in extracellular body fluids with serine proteases such as activated protein C/coagulation factor V/F5, acrosin/ACR, chymotrypsinogen B/CTRB1, prothrombin/F2, factor Xa/F10, factor XI/F11, kallikrein/KLKB1, tissue kallikrein, trypsin/PRSS1, prostate specific antigen/KLK3, tissue plasminogen activator/PLAT and urinary plasminogen activator/PLAU. Forms membrane-anchored serine proteases inhibiting heterodimers with TMPRSS7 and TMPRSS11E. Interacts with SEMG2 (By similarity).</text>
</comment>
<comment type="subcellular location">
    <subcellularLocation>
        <location evidence="1">Secreted</location>
        <location evidence="1">Extracellular space</location>
    </subcellularLocation>
    <text evidence="1">Localized on the plasma membrane overlying the acrosomal head of spermatozoa of ependymal spermatozoa and ejaculated sperm. Localized at the equatorial segment of acrosome-reacted spermatozoa. Localized in alpha granules in resting platelets and on the external plasma membrane and within the surface-connected cannalicular system in activated platelets (By similarity).</text>
</comment>
<comment type="tissue specificity">
    <text evidence="3">Expressed strongly in the liver, and moderately in the kidney and testis, but not in other tissues tested.</text>
</comment>
<comment type="domain">
    <text evidence="1">The reactive center loop (RCL) extends out from the body of the protein and directs binding to the target protease. The protease cleaves the serpin at the reactive site within the RCL, establishing a covalent linkage between the carboxyl group of the serpin reactive site and the serine hydroxyl of the protease. The resulting inactive serpin-protease complex is highly stable (By similarity).</text>
</comment>
<comment type="PTM">
    <text evidence="1 5">N-glycosylated; glycans consist of a mixture of sialylated bi- (including sialyl-Lewis X epitopes), tri- and tetra-antennary complex-type chains; affects the maximal heparin- and thrombomodulin-enhanced rates of thrombin inhibition. O-glycosylated; further modified with 2 sialic acid residues. Proteolytically cleaved at the N-terminus; inhibits slightly the heparin- and thrombomodulin-enhanced rates of thrombin inhibition (By similarity). N- and O-glycosylated.</text>
</comment>
<comment type="PTM">
    <text>Proteolytically cleaved. Inhibition of proteases is accompanied by formation of a stable enzyme-inhibitor complex and by degradation of the serpin to lower molecular weight derivatives.</text>
</comment>
<comment type="similarity">
    <text evidence="6">Belongs to the serpin family.</text>
</comment>
<feature type="signal peptide" evidence="5">
    <location>
        <begin position="1"/>
        <end position="19"/>
    </location>
</feature>
<feature type="propeptide" id="PRO_0000414093" description="Removed in mature form" evidence="1">
    <location>
        <begin position="20"/>
        <end position="24"/>
    </location>
</feature>
<feature type="chain" id="PRO_0000244409" description="Plasma serine protease inhibitor">
    <location>
        <begin position="25"/>
        <end position="404"/>
    </location>
</feature>
<feature type="site" description="Reactive bond">
    <location>
        <begin position="369"/>
        <end position="370"/>
    </location>
</feature>
<feature type="glycosylation site" description="O-linked (GalNAc...) threonine" evidence="4">
    <location>
        <position position="35"/>
    </location>
</feature>
<feature type="glycosylation site" description="O-linked (GalNAc...) threonine" evidence="4">
    <location>
        <position position="36"/>
    </location>
</feature>
<feature type="glycosylation site" description="N-linked (GlcNAc...) asparagine" evidence="2">
    <location>
        <position position="245"/>
    </location>
</feature>
<feature type="glycosylation site" description="N-linked (GlcNAc...) asparagine" evidence="2">
    <location>
        <position position="258"/>
    </location>
</feature>
<feature type="glycosylation site" description="N-linked (GlcNAc...) asparagine" evidence="2">
    <location>
        <position position="334"/>
    </location>
</feature>
<feature type="helix" evidence="7">
    <location>
        <begin position="44"/>
        <end position="55"/>
    </location>
</feature>
<feature type="strand" evidence="7">
    <location>
        <begin position="61"/>
        <end position="63"/>
    </location>
</feature>
<feature type="helix" evidence="7">
    <location>
        <begin position="65"/>
        <end position="75"/>
    </location>
</feature>
<feature type="helix" evidence="7">
    <location>
        <begin position="76"/>
        <end position="78"/>
    </location>
</feature>
<feature type="helix" evidence="7">
    <location>
        <begin position="81"/>
        <end position="90"/>
    </location>
</feature>
<feature type="helix" evidence="7">
    <location>
        <begin position="100"/>
        <end position="113"/>
    </location>
</feature>
<feature type="strand" evidence="7">
    <location>
        <begin position="123"/>
        <end position="132"/>
    </location>
</feature>
<feature type="helix" evidence="7">
    <location>
        <begin position="139"/>
        <end position="149"/>
    </location>
</feature>
<feature type="strand" evidence="7">
    <location>
        <begin position="152"/>
        <end position="156"/>
    </location>
</feature>
<feature type="helix" evidence="7">
    <location>
        <begin position="161"/>
        <end position="175"/>
    </location>
</feature>
<feature type="turn" evidence="7">
    <location>
        <begin position="176"/>
        <end position="178"/>
    </location>
</feature>
<feature type="strand" evidence="7">
    <location>
        <begin position="192"/>
        <end position="201"/>
    </location>
</feature>
<feature type="strand" evidence="7">
    <location>
        <begin position="205"/>
        <end position="207"/>
    </location>
</feature>
<feature type="turn" evidence="7">
    <location>
        <begin position="211"/>
        <end position="213"/>
    </location>
</feature>
<feature type="strand" evidence="7">
    <location>
        <begin position="215"/>
        <end position="224"/>
    </location>
</feature>
<feature type="strand" evidence="7">
    <location>
        <begin position="226"/>
        <end position="243"/>
    </location>
</feature>
<feature type="turn" evidence="7">
    <location>
        <begin position="244"/>
        <end position="247"/>
    </location>
</feature>
<feature type="strand" evidence="7">
    <location>
        <begin position="248"/>
        <end position="258"/>
    </location>
</feature>
<feature type="strand" evidence="7">
    <location>
        <begin position="260"/>
        <end position="266"/>
    </location>
</feature>
<feature type="helix" evidence="7">
    <location>
        <begin position="271"/>
        <end position="277"/>
    </location>
</feature>
<feature type="helix" evidence="7">
    <location>
        <begin position="280"/>
        <end position="289"/>
    </location>
</feature>
<feature type="strand" evidence="7">
    <location>
        <begin position="291"/>
        <end position="300"/>
    </location>
</feature>
<feature type="strand" evidence="7">
    <location>
        <begin position="302"/>
        <end position="309"/>
    </location>
</feature>
<feature type="helix" evidence="7">
    <location>
        <begin position="310"/>
        <end position="312"/>
    </location>
</feature>
<feature type="helix" evidence="7">
    <location>
        <begin position="314"/>
        <end position="317"/>
    </location>
</feature>
<feature type="helix" evidence="7">
    <location>
        <begin position="321"/>
        <end position="323"/>
    </location>
</feature>
<feature type="turn" evidence="7">
    <location>
        <begin position="330"/>
        <end position="332"/>
    </location>
</feature>
<feature type="strand" evidence="7">
    <location>
        <begin position="341"/>
        <end position="351"/>
    </location>
</feature>
<feature type="strand" evidence="7">
    <location>
        <begin position="355"/>
        <end position="357"/>
    </location>
</feature>
<feature type="strand" evidence="7">
    <location>
        <begin position="365"/>
        <end position="367"/>
    </location>
</feature>
<feature type="strand" evidence="7">
    <location>
        <begin position="376"/>
        <end position="379"/>
    </location>
</feature>
<feature type="strand" evidence="7">
    <location>
        <begin position="384"/>
        <end position="392"/>
    </location>
</feature>
<feature type="strand" evidence="7">
    <location>
        <begin position="395"/>
        <end position="402"/>
    </location>
</feature>
<evidence type="ECO:0000250" key="1"/>
<evidence type="ECO:0000255" key="2"/>
<evidence type="ECO:0000269" key="3">
    <source>
    </source>
</evidence>
<evidence type="ECO:0000269" key="4">
    <source>
    </source>
</evidence>
<evidence type="ECO:0000269" key="5">
    <source>
    </source>
</evidence>
<evidence type="ECO:0000305" key="6"/>
<evidence type="ECO:0007829" key="7">
    <source>
        <dbReference type="PDB" id="3B9F"/>
    </source>
</evidence>